<evidence type="ECO:0000255" key="1">
    <source>
        <dbReference type="HAMAP-Rule" id="MF_01588"/>
    </source>
</evidence>
<name>DNLJ_STRPG</name>
<organism>
    <name type="scientific">Streptococcus pyogenes serotype M5 (strain Manfredo)</name>
    <dbReference type="NCBI Taxonomy" id="160491"/>
    <lineage>
        <taxon>Bacteria</taxon>
        <taxon>Bacillati</taxon>
        <taxon>Bacillota</taxon>
        <taxon>Bacilli</taxon>
        <taxon>Lactobacillales</taxon>
        <taxon>Streptococcaceae</taxon>
        <taxon>Streptococcus</taxon>
    </lineage>
</organism>
<comment type="function">
    <text evidence="1">DNA ligase that catalyzes the formation of phosphodiester linkages between 5'-phosphoryl and 3'-hydroxyl groups in double-stranded DNA using NAD as a coenzyme and as the energy source for the reaction. It is essential for DNA replication and repair of damaged DNA.</text>
</comment>
<comment type="catalytic activity">
    <reaction evidence="1">
        <text>NAD(+) + (deoxyribonucleotide)n-3'-hydroxyl + 5'-phospho-(deoxyribonucleotide)m = (deoxyribonucleotide)n+m + AMP + beta-nicotinamide D-nucleotide.</text>
        <dbReference type="EC" id="6.5.1.2"/>
    </reaction>
</comment>
<comment type="cofactor">
    <cofactor evidence="1">
        <name>Mg(2+)</name>
        <dbReference type="ChEBI" id="CHEBI:18420"/>
    </cofactor>
    <cofactor evidence="1">
        <name>Mn(2+)</name>
        <dbReference type="ChEBI" id="CHEBI:29035"/>
    </cofactor>
</comment>
<comment type="similarity">
    <text evidence="1">Belongs to the NAD-dependent DNA ligase family. LigA subfamily.</text>
</comment>
<protein>
    <recommendedName>
        <fullName evidence="1">DNA ligase</fullName>
        <ecNumber evidence="1">6.5.1.2</ecNumber>
    </recommendedName>
    <alternativeName>
        <fullName evidence="1">Polydeoxyribonucleotide synthase [NAD(+)]</fullName>
    </alternativeName>
</protein>
<sequence>MKKRIKELTDLLNRYRYDYYTKDAPSVSDSDYDKLYRELVTLEQSYPEYVLQDSPTQQVGGTILKGFEKYRHQYPLFSLQDAFSREELDAFDKRVKAEFPNATYLAELKIDGLSISLSYENGFLQVGATRGDGNIGENITENIKKIKDIPHQLSEPLTITVRGEAYMSRQSFKAINEARQENGETEFANPRNAAAGTLRQLDTSVVAKRQLATFLYQEASPTARNQQNEVLAELADLGFSVNPYYQLTSSMDEIWDFIKTIEAKRDQLAYDIDGVVIKVNSLAMQEELGFTVKAPRWAIAYKFPAEEKEAEILSVDWTVGRTGVVTPTANLTPVQLAGTTVSRATLHNVDYIAEKDIRIGDTVIVYKAGDIIPAVLNVVMSKRNQQEVMLIPKLCPSCGSELVHFEDEVALRCINPLCPSLIQRSLEHFASRDAMNITGLGPAIVEKLFLAGFVHDVADIYQLTKEDFMQLDGIKEKSADKLLAAIEASKSNSAEKLLFGLGIRHIGSKVSRLILEVYGDISALLTAKEEEIARIDGLGSTIAQSLTQYFEQKTAAILVDELKTAGVNMHYSGQKVNSDAALFGLTVVLTGKLNQLNRNEAKDKLEALGAKVTGSVSKKTDLVIAGSDAGSKLEKAKSLGIRIEDEDWLRKL</sequence>
<accession>A2RFD0</accession>
<proteinExistence type="inferred from homology"/>
<gene>
    <name evidence="1" type="primary">ligA</name>
    <name type="ordered locus">SpyM51235</name>
</gene>
<keyword id="KW-0227">DNA damage</keyword>
<keyword id="KW-0234">DNA repair</keyword>
<keyword id="KW-0235">DNA replication</keyword>
<keyword id="KW-0436">Ligase</keyword>
<keyword id="KW-0460">Magnesium</keyword>
<keyword id="KW-0464">Manganese</keyword>
<keyword id="KW-0479">Metal-binding</keyword>
<keyword id="KW-0520">NAD</keyword>
<keyword id="KW-0862">Zinc</keyword>
<feature type="chain" id="PRO_0000313465" description="DNA ligase">
    <location>
        <begin position="1"/>
        <end position="652"/>
    </location>
</feature>
<feature type="domain" description="BRCT" evidence="1">
    <location>
        <begin position="577"/>
        <end position="652"/>
    </location>
</feature>
<feature type="active site" description="N6-AMP-lysine intermediate" evidence="1">
    <location>
        <position position="109"/>
    </location>
</feature>
<feature type="binding site" evidence="1">
    <location>
        <begin position="29"/>
        <end position="33"/>
    </location>
    <ligand>
        <name>NAD(+)</name>
        <dbReference type="ChEBI" id="CHEBI:57540"/>
    </ligand>
</feature>
<feature type="binding site" evidence="1">
    <location>
        <begin position="78"/>
        <end position="79"/>
    </location>
    <ligand>
        <name>NAD(+)</name>
        <dbReference type="ChEBI" id="CHEBI:57540"/>
    </ligand>
</feature>
<feature type="binding site" evidence="1">
    <location>
        <position position="107"/>
    </location>
    <ligand>
        <name>NAD(+)</name>
        <dbReference type="ChEBI" id="CHEBI:57540"/>
    </ligand>
</feature>
<feature type="binding site" evidence="1">
    <location>
        <position position="130"/>
    </location>
    <ligand>
        <name>NAD(+)</name>
        <dbReference type="ChEBI" id="CHEBI:57540"/>
    </ligand>
</feature>
<feature type="binding site" evidence="1">
    <location>
        <position position="164"/>
    </location>
    <ligand>
        <name>NAD(+)</name>
        <dbReference type="ChEBI" id="CHEBI:57540"/>
    </ligand>
</feature>
<feature type="binding site" evidence="1">
    <location>
        <position position="278"/>
    </location>
    <ligand>
        <name>NAD(+)</name>
        <dbReference type="ChEBI" id="CHEBI:57540"/>
    </ligand>
</feature>
<feature type="binding site" evidence="1">
    <location>
        <position position="302"/>
    </location>
    <ligand>
        <name>NAD(+)</name>
        <dbReference type="ChEBI" id="CHEBI:57540"/>
    </ligand>
</feature>
<feature type="binding site" evidence="1">
    <location>
        <position position="395"/>
    </location>
    <ligand>
        <name>Zn(2+)</name>
        <dbReference type="ChEBI" id="CHEBI:29105"/>
    </ligand>
</feature>
<feature type="binding site" evidence="1">
    <location>
        <position position="398"/>
    </location>
    <ligand>
        <name>Zn(2+)</name>
        <dbReference type="ChEBI" id="CHEBI:29105"/>
    </ligand>
</feature>
<feature type="binding site" evidence="1">
    <location>
        <position position="413"/>
    </location>
    <ligand>
        <name>Zn(2+)</name>
        <dbReference type="ChEBI" id="CHEBI:29105"/>
    </ligand>
</feature>
<feature type="binding site" evidence="1">
    <location>
        <position position="418"/>
    </location>
    <ligand>
        <name>Zn(2+)</name>
        <dbReference type="ChEBI" id="CHEBI:29105"/>
    </ligand>
</feature>
<reference key="1">
    <citation type="journal article" date="2007" name="J. Bacteriol.">
        <title>Complete genome of acute rheumatic fever-associated serotype M5 Streptococcus pyogenes strain Manfredo.</title>
        <authorList>
            <person name="Holden M.T.G."/>
            <person name="Scott A."/>
            <person name="Cherevach I."/>
            <person name="Chillingworth T."/>
            <person name="Churcher C."/>
            <person name="Cronin A."/>
            <person name="Dowd L."/>
            <person name="Feltwell T."/>
            <person name="Hamlin N."/>
            <person name="Holroyd S."/>
            <person name="Jagels K."/>
            <person name="Moule S."/>
            <person name="Mungall K."/>
            <person name="Quail M.A."/>
            <person name="Price C."/>
            <person name="Rabbinowitsch E."/>
            <person name="Sharp S."/>
            <person name="Skelton J."/>
            <person name="Whitehead S."/>
            <person name="Barrell B.G."/>
            <person name="Kehoe M."/>
            <person name="Parkhill J."/>
        </authorList>
    </citation>
    <scope>NUCLEOTIDE SEQUENCE [LARGE SCALE GENOMIC DNA]</scope>
    <source>
        <strain>Manfredo</strain>
    </source>
</reference>
<dbReference type="EC" id="6.5.1.2" evidence="1"/>
<dbReference type="EMBL" id="AM295007">
    <property type="protein sequence ID" value="CAM30559.1"/>
    <property type="molecule type" value="Genomic_DNA"/>
</dbReference>
<dbReference type="RefSeq" id="WP_011017608.1">
    <property type="nucleotide sequence ID" value="NC_009332.1"/>
</dbReference>
<dbReference type="SMR" id="A2RFD0"/>
<dbReference type="KEGG" id="spf:SpyM51235"/>
<dbReference type="HOGENOM" id="CLU_007764_2_1_9"/>
<dbReference type="GO" id="GO:0005829">
    <property type="term" value="C:cytosol"/>
    <property type="evidence" value="ECO:0007669"/>
    <property type="project" value="TreeGrafter"/>
</dbReference>
<dbReference type="GO" id="GO:0003677">
    <property type="term" value="F:DNA binding"/>
    <property type="evidence" value="ECO:0007669"/>
    <property type="project" value="InterPro"/>
</dbReference>
<dbReference type="GO" id="GO:0003911">
    <property type="term" value="F:DNA ligase (NAD+) activity"/>
    <property type="evidence" value="ECO:0007669"/>
    <property type="project" value="UniProtKB-UniRule"/>
</dbReference>
<dbReference type="GO" id="GO:0046872">
    <property type="term" value="F:metal ion binding"/>
    <property type="evidence" value="ECO:0007669"/>
    <property type="project" value="UniProtKB-KW"/>
</dbReference>
<dbReference type="GO" id="GO:0006281">
    <property type="term" value="P:DNA repair"/>
    <property type="evidence" value="ECO:0007669"/>
    <property type="project" value="UniProtKB-KW"/>
</dbReference>
<dbReference type="GO" id="GO:0006260">
    <property type="term" value="P:DNA replication"/>
    <property type="evidence" value="ECO:0007669"/>
    <property type="project" value="UniProtKB-KW"/>
</dbReference>
<dbReference type="CDD" id="cd17748">
    <property type="entry name" value="BRCT_DNA_ligase_like"/>
    <property type="match status" value="1"/>
</dbReference>
<dbReference type="CDD" id="cd00114">
    <property type="entry name" value="LIGANc"/>
    <property type="match status" value="1"/>
</dbReference>
<dbReference type="FunFam" id="1.10.150.20:FF:000007">
    <property type="entry name" value="DNA ligase"/>
    <property type="match status" value="1"/>
</dbReference>
<dbReference type="FunFam" id="1.10.287.610:FF:000002">
    <property type="entry name" value="DNA ligase"/>
    <property type="match status" value="1"/>
</dbReference>
<dbReference type="FunFam" id="2.40.50.140:FF:000012">
    <property type="entry name" value="DNA ligase"/>
    <property type="match status" value="1"/>
</dbReference>
<dbReference type="FunFam" id="3.30.470.30:FF:000001">
    <property type="entry name" value="DNA ligase"/>
    <property type="match status" value="1"/>
</dbReference>
<dbReference type="Gene3D" id="6.20.10.30">
    <property type="match status" value="1"/>
</dbReference>
<dbReference type="Gene3D" id="1.10.150.20">
    <property type="entry name" value="5' to 3' exonuclease, C-terminal subdomain"/>
    <property type="match status" value="2"/>
</dbReference>
<dbReference type="Gene3D" id="3.40.50.10190">
    <property type="entry name" value="BRCT domain"/>
    <property type="match status" value="1"/>
</dbReference>
<dbReference type="Gene3D" id="3.30.470.30">
    <property type="entry name" value="DNA ligase/mRNA capping enzyme"/>
    <property type="match status" value="1"/>
</dbReference>
<dbReference type="Gene3D" id="1.10.287.610">
    <property type="entry name" value="Helix hairpin bin"/>
    <property type="match status" value="1"/>
</dbReference>
<dbReference type="Gene3D" id="2.40.50.140">
    <property type="entry name" value="Nucleic acid-binding proteins"/>
    <property type="match status" value="1"/>
</dbReference>
<dbReference type="HAMAP" id="MF_01588">
    <property type="entry name" value="DNA_ligase_A"/>
    <property type="match status" value="1"/>
</dbReference>
<dbReference type="InterPro" id="IPR001357">
    <property type="entry name" value="BRCT_dom"/>
</dbReference>
<dbReference type="InterPro" id="IPR036420">
    <property type="entry name" value="BRCT_dom_sf"/>
</dbReference>
<dbReference type="InterPro" id="IPR041663">
    <property type="entry name" value="DisA/LigA_HHH"/>
</dbReference>
<dbReference type="InterPro" id="IPR001679">
    <property type="entry name" value="DNA_ligase"/>
</dbReference>
<dbReference type="InterPro" id="IPR018239">
    <property type="entry name" value="DNA_ligase_AS"/>
</dbReference>
<dbReference type="InterPro" id="IPR033136">
    <property type="entry name" value="DNA_ligase_CS"/>
</dbReference>
<dbReference type="InterPro" id="IPR013839">
    <property type="entry name" value="DNAligase_adenylation"/>
</dbReference>
<dbReference type="InterPro" id="IPR013840">
    <property type="entry name" value="DNAligase_N"/>
</dbReference>
<dbReference type="InterPro" id="IPR003583">
    <property type="entry name" value="Hlx-hairpin-Hlx_DNA-bd_motif"/>
</dbReference>
<dbReference type="InterPro" id="IPR012340">
    <property type="entry name" value="NA-bd_OB-fold"/>
</dbReference>
<dbReference type="InterPro" id="IPR004150">
    <property type="entry name" value="NAD_DNA_ligase_OB"/>
</dbReference>
<dbReference type="InterPro" id="IPR010994">
    <property type="entry name" value="RuvA_2-like"/>
</dbReference>
<dbReference type="InterPro" id="IPR004149">
    <property type="entry name" value="Znf_DNAligase_C4"/>
</dbReference>
<dbReference type="NCBIfam" id="TIGR00575">
    <property type="entry name" value="dnlj"/>
    <property type="match status" value="1"/>
</dbReference>
<dbReference type="NCBIfam" id="NF005932">
    <property type="entry name" value="PRK07956.1"/>
    <property type="match status" value="1"/>
</dbReference>
<dbReference type="PANTHER" id="PTHR23389">
    <property type="entry name" value="CHROMOSOME TRANSMISSION FIDELITY FACTOR 18"/>
    <property type="match status" value="1"/>
</dbReference>
<dbReference type="PANTHER" id="PTHR23389:SF9">
    <property type="entry name" value="DNA LIGASE"/>
    <property type="match status" value="1"/>
</dbReference>
<dbReference type="Pfam" id="PF00533">
    <property type="entry name" value="BRCT"/>
    <property type="match status" value="1"/>
</dbReference>
<dbReference type="Pfam" id="PF01653">
    <property type="entry name" value="DNA_ligase_aden"/>
    <property type="match status" value="1"/>
</dbReference>
<dbReference type="Pfam" id="PF03120">
    <property type="entry name" value="DNA_ligase_OB"/>
    <property type="match status" value="1"/>
</dbReference>
<dbReference type="Pfam" id="PF03119">
    <property type="entry name" value="DNA_ligase_ZBD"/>
    <property type="match status" value="1"/>
</dbReference>
<dbReference type="Pfam" id="PF12826">
    <property type="entry name" value="HHH_2"/>
    <property type="match status" value="1"/>
</dbReference>
<dbReference type="Pfam" id="PF14520">
    <property type="entry name" value="HHH_5"/>
    <property type="match status" value="1"/>
</dbReference>
<dbReference type="PIRSF" id="PIRSF001604">
    <property type="entry name" value="LigA"/>
    <property type="match status" value="1"/>
</dbReference>
<dbReference type="SMART" id="SM00292">
    <property type="entry name" value="BRCT"/>
    <property type="match status" value="1"/>
</dbReference>
<dbReference type="SMART" id="SM00278">
    <property type="entry name" value="HhH1"/>
    <property type="match status" value="3"/>
</dbReference>
<dbReference type="SMART" id="SM00532">
    <property type="entry name" value="LIGANc"/>
    <property type="match status" value="1"/>
</dbReference>
<dbReference type="SUPFAM" id="SSF52113">
    <property type="entry name" value="BRCT domain"/>
    <property type="match status" value="1"/>
</dbReference>
<dbReference type="SUPFAM" id="SSF56091">
    <property type="entry name" value="DNA ligase/mRNA capping enzyme, catalytic domain"/>
    <property type="match status" value="1"/>
</dbReference>
<dbReference type="SUPFAM" id="SSF50249">
    <property type="entry name" value="Nucleic acid-binding proteins"/>
    <property type="match status" value="1"/>
</dbReference>
<dbReference type="SUPFAM" id="SSF47781">
    <property type="entry name" value="RuvA domain 2-like"/>
    <property type="match status" value="1"/>
</dbReference>
<dbReference type="PROSITE" id="PS50172">
    <property type="entry name" value="BRCT"/>
    <property type="match status" value="1"/>
</dbReference>
<dbReference type="PROSITE" id="PS01055">
    <property type="entry name" value="DNA_LIGASE_N1"/>
    <property type="match status" value="1"/>
</dbReference>
<dbReference type="PROSITE" id="PS01056">
    <property type="entry name" value="DNA_LIGASE_N2"/>
    <property type="match status" value="1"/>
</dbReference>